<reference key="1">
    <citation type="submission" date="2005-09" db="EMBL/GenBank/DDBJ databases">
        <title>Complete genome sequence of Clostridium kluyveri and comparative genomics of Clostridia species.</title>
        <authorList>
            <person name="Inui M."/>
            <person name="Nonaka H."/>
            <person name="Shinoda Y."/>
            <person name="Ikenaga Y."/>
            <person name="Abe M."/>
            <person name="Naito K."/>
            <person name="Vertes A.A."/>
            <person name="Yukawa H."/>
        </authorList>
    </citation>
    <scope>NUCLEOTIDE SEQUENCE [LARGE SCALE GENOMIC DNA]</scope>
    <source>
        <strain>NBRC 12016</strain>
    </source>
</reference>
<feature type="chain" id="PRO_1000191054" description="2-C-methyl-D-erythritol 4-phosphate cytidylyltransferase">
    <location>
        <begin position="1"/>
        <end position="231"/>
    </location>
</feature>
<feature type="site" description="Transition state stabilizer" evidence="1">
    <location>
        <position position="16"/>
    </location>
</feature>
<feature type="site" description="Transition state stabilizer" evidence="1">
    <location>
        <position position="23"/>
    </location>
</feature>
<feature type="site" description="Positions MEP for the nucleophilic attack" evidence="1">
    <location>
        <position position="155"/>
    </location>
</feature>
<feature type="site" description="Positions MEP for the nucleophilic attack" evidence="1">
    <location>
        <position position="211"/>
    </location>
</feature>
<sequence>MKSNYAVIVAAGKGKRMKMPINKQFICIQGKPILYYSISVFSKNPLVDKIVLVCAEDEIEYCKQEIVKKYNFDKVVKIVSGGKERQHSVFNALKVLENCSVVLIHDGARPFVTDRIIEDGIKYSNMYGACACGVVPKDTIKIKGKEGFSYKTLVRKELFIVQTPQCFDYNLIYDCHKKLANNKVQVTDDTTVAEYFGNMVYLYEGSYDNIKITTPEDLIIAENIFKTHKYI</sequence>
<name>ISPD_CLOK1</name>
<dbReference type="EC" id="2.7.7.60" evidence="1"/>
<dbReference type="EMBL" id="AP009049">
    <property type="protein sequence ID" value="BAH05212.1"/>
    <property type="molecule type" value="Genomic_DNA"/>
</dbReference>
<dbReference type="RefSeq" id="WP_011988782.1">
    <property type="nucleotide sequence ID" value="NC_011837.1"/>
</dbReference>
<dbReference type="SMR" id="B9DY87"/>
<dbReference type="KEGG" id="ckr:CKR_0161"/>
<dbReference type="HOGENOM" id="CLU_061281_2_2_9"/>
<dbReference type="UniPathway" id="UPA00056">
    <property type="reaction ID" value="UER00093"/>
</dbReference>
<dbReference type="Proteomes" id="UP000007969">
    <property type="component" value="Chromosome"/>
</dbReference>
<dbReference type="GO" id="GO:0050518">
    <property type="term" value="F:2-C-methyl-D-erythritol 4-phosphate cytidylyltransferase activity"/>
    <property type="evidence" value="ECO:0007669"/>
    <property type="project" value="UniProtKB-UniRule"/>
</dbReference>
<dbReference type="GO" id="GO:0019288">
    <property type="term" value="P:isopentenyl diphosphate biosynthetic process, methylerythritol 4-phosphate pathway"/>
    <property type="evidence" value="ECO:0007669"/>
    <property type="project" value="UniProtKB-UniRule"/>
</dbReference>
<dbReference type="CDD" id="cd02516">
    <property type="entry name" value="CDP-ME_synthetase"/>
    <property type="match status" value="1"/>
</dbReference>
<dbReference type="FunFam" id="3.90.550.10:FF:000003">
    <property type="entry name" value="2-C-methyl-D-erythritol 4-phosphate cytidylyltransferase"/>
    <property type="match status" value="1"/>
</dbReference>
<dbReference type="Gene3D" id="3.90.550.10">
    <property type="entry name" value="Spore Coat Polysaccharide Biosynthesis Protein SpsA, Chain A"/>
    <property type="match status" value="1"/>
</dbReference>
<dbReference type="HAMAP" id="MF_00108">
    <property type="entry name" value="IspD"/>
    <property type="match status" value="1"/>
</dbReference>
<dbReference type="InterPro" id="IPR001228">
    <property type="entry name" value="IspD"/>
</dbReference>
<dbReference type="InterPro" id="IPR034683">
    <property type="entry name" value="IspD/TarI"/>
</dbReference>
<dbReference type="InterPro" id="IPR050088">
    <property type="entry name" value="IspD/TarI_cytidylyltransf_bact"/>
</dbReference>
<dbReference type="InterPro" id="IPR018294">
    <property type="entry name" value="ISPD_synthase_CS"/>
</dbReference>
<dbReference type="InterPro" id="IPR029044">
    <property type="entry name" value="Nucleotide-diphossugar_trans"/>
</dbReference>
<dbReference type="NCBIfam" id="TIGR00453">
    <property type="entry name" value="ispD"/>
    <property type="match status" value="1"/>
</dbReference>
<dbReference type="PANTHER" id="PTHR32125">
    <property type="entry name" value="2-C-METHYL-D-ERYTHRITOL 4-PHOSPHATE CYTIDYLYLTRANSFERASE, CHLOROPLASTIC"/>
    <property type="match status" value="1"/>
</dbReference>
<dbReference type="PANTHER" id="PTHR32125:SF4">
    <property type="entry name" value="2-C-METHYL-D-ERYTHRITOL 4-PHOSPHATE CYTIDYLYLTRANSFERASE, CHLOROPLASTIC"/>
    <property type="match status" value="1"/>
</dbReference>
<dbReference type="Pfam" id="PF01128">
    <property type="entry name" value="IspD"/>
    <property type="match status" value="1"/>
</dbReference>
<dbReference type="SUPFAM" id="SSF53448">
    <property type="entry name" value="Nucleotide-diphospho-sugar transferases"/>
    <property type="match status" value="1"/>
</dbReference>
<dbReference type="PROSITE" id="PS01295">
    <property type="entry name" value="ISPD"/>
    <property type="match status" value="1"/>
</dbReference>
<accession>B9DY87</accession>
<organism>
    <name type="scientific">Clostridium kluyveri (strain NBRC 12016)</name>
    <dbReference type="NCBI Taxonomy" id="583346"/>
    <lineage>
        <taxon>Bacteria</taxon>
        <taxon>Bacillati</taxon>
        <taxon>Bacillota</taxon>
        <taxon>Clostridia</taxon>
        <taxon>Eubacteriales</taxon>
        <taxon>Clostridiaceae</taxon>
        <taxon>Clostridium</taxon>
    </lineage>
</organism>
<gene>
    <name evidence="1" type="primary">ispD</name>
    <name type="ordered locus">CKR_0161</name>
</gene>
<comment type="function">
    <text evidence="1">Catalyzes the formation of 4-diphosphocytidyl-2-C-methyl-D-erythritol from CTP and 2-C-methyl-D-erythritol 4-phosphate (MEP).</text>
</comment>
<comment type="catalytic activity">
    <reaction evidence="1">
        <text>2-C-methyl-D-erythritol 4-phosphate + CTP + H(+) = 4-CDP-2-C-methyl-D-erythritol + diphosphate</text>
        <dbReference type="Rhea" id="RHEA:13429"/>
        <dbReference type="ChEBI" id="CHEBI:15378"/>
        <dbReference type="ChEBI" id="CHEBI:33019"/>
        <dbReference type="ChEBI" id="CHEBI:37563"/>
        <dbReference type="ChEBI" id="CHEBI:57823"/>
        <dbReference type="ChEBI" id="CHEBI:58262"/>
        <dbReference type="EC" id="2.7.7.60"/>
    </reaction>
</comment>
<comment type="pathway">
    <text evidence="1">Isoprenoid biosynthesis; isopentenyl diphosphate biosynthesis via DXP pathway; isopentenyl diphosphate from 1-deoxy-D-xylulose 5-phosphate: step 2/6.</text>
</comment>
<comment type="similarity">
    <text evidence="1">Belongs to the IspD/TarI cytidylyltransferase family. IspD subfamily.</text>
</comment>
<protein>
    <recommendedName>
        <fullName evidence="1">2-C-methyl-D-erythritol 4-phosphate cytidylyltransferase</fullName>
        <ecNumber evidence="1">2.7.7.60</ecNumber>
    </recommendedName>
    <alternativeName>
        <fullName evidence="1">4-diphosphocytidyl-2C-methyl-D-erythritol synthase</fullName>
    </alternativeName>
    <alternativeName>
        <fullName evidence="1">MEP cytidylyltransferase</fullName>
        <shortName evidence="1">MCT</shortName>
    </alternativeName>
</protein>
<evidence type="ECO:0000255" key="1">
    <source>
        <dbReference type="HAMAP-Rule" id="MF_00108"/>
    </source>
</evidence>
<proteinExistence type="inferred from homology"/>
<keyword id="KW-0414">Isoprene biosynthesis</keyword>
<keyword id="KW-0548">Nucleotidyltransferase</keyword>
<keyword id="KW-0808">Transferase</keyword>